<gene>
    <name evidence="1" type="primary">gltX2</name>
    <name type="ordered locus">CBUD_1892</name>
</gene>
<protein>
    <recommendedName>
        <fullName evidence="1">Glutamate--tRNA ligase 2</fullName>
        <ecNumber evidence="1">6.1.1.17</ecNumber>
    </recommendedName>
    <alternativeName>
        <fullName evidence="1">Glutamyl-tRNA synthetase 2</fullName>
        <shortName evidence="1">GluRS 2</shortName>
    </alternativeName>
</protein>
<name>SYE2_COXBN</name>
<proteinExistence type="inferred from homology"/>
<organism>
    <name type="scientific">Coxiella burnetii (strain Dugway 5J108-111)</name>
    <dbReference type="NCBI Taxonomy" id="434922"/>
    <lineage>
        <taxon>Bacteria</taxon>
        <taxon>Pseudomonadati</taxon>
        <taxon>Pseudomonadota</taxon>
        <taxon>Gammaproteobacteria</taxon>
        <taxon>Legionellales</taxon>
        <taxon>Coxiellaceae</taxon>
        <taxon>Coxiella</taxon>
    </lineage>
</organism>
<dbReference type="EC" id="6.1.1.17" evidence="1"/>
<dbReference type="EMBL" id="CP000733">
    <property type="protein sequence ID" value="ABS76545.2"/>
    <property type="status" value="ALT_INIT"/>
    <property type="molecule type" value="Genomic_DNA"/>
</dbReference>
<dbReference type="SMR" id="A9KD63"/>
<dbReference type="KEGG" id="cbd:CBUD_1892"/>
<dbReference type="HOGENOM" id="CLU_015768_6_0_6"/>
<dbReference type="Proteomes" id="UP000008555">
    <property type="component" value="Chromosome"/>
</dbReference>
<dbReference type="GO" id="GO:0005829">
    <property type="term" value="C:cytosol"/>
    <property type="evidence" value="ECO:0007669"/>
    <property type="project" value="TreeGrafter"/>
</dbReference>
<dbReference type="GO" id="GO:0005524">
    <property type="term" value="F:ATP binding"/>
    <property type="evidence" value="ECO:0007669"/>
    <property type="project" value="UniProtKB-UniRule"/>
</dbReference>
<dbReference type="GO" id="GO:0004818">
    <property type="term" value="F:glutamate-tRNA ligase activity"/>
    <property type="evidence" value="ECO:0007669"/>
    <property type="project" value="UniProtKB-UniRule"/>
</dbReference>
<dbReference type="GO" id="GO:0000049">
    <property type="term" value="F:tRNA binding"/>
    <property type="evidence" value="ECO:0007669"/>
    <property type="project" value="InterPro"/>
</dbReference>
<dbReference type="GO" id="GO:0008270">
    <property type="term" value="F:zinc ion binding"/>
    <property type="evidence" value="ECO:0007669"/>
    <property type="project" value="UniProtKB-UniRule"/>
</dbReference>
<dbReference type="GO" id="GO:0006424">
    <property type="term" value="P:glutamyl-tRNA aminoacylation"/>
    <property type="evidence" value="ECO:0007669"/>
    <property type="project" value="UniProtKB-UniRule"/>
</dbReference>
<dbReference type="CDD" id="cd00808">
    <property type="entry name" value="GluRS_core"/>
    <property type="match status" value="1"/>
</dbReference>
<dbReference type="FunFam" id="3.40.50.620:FF:000007">
    <property type="entry name" value="Glutamate--tRNA ligase"/>
    <property type="match status" value="1"/>
</dbReference>
<dbReference type="Gene3D" id="1.10.10.350">
    <property type="match status" value="1"/>
</dbReference>
<dbReference type="Gene3D" id="3.40.50.620">
    <property type="entry name" value="HUPs"/>
    <property type="match status" value="1"/>
</dbReference>
<dbReference type="HAMAP" id="MF_00022">
    <property type="entry name" value="Glu_tRNA_synth_type1"/>
    <property type="match status" value="1"/>
</dbReference>
<dbReference type="InterPro" id="IPR045462">
    <property type="entry name" value="aa-tRNA-synth_I_cd-bd"/>
</dbReference>
<dbReference type="InterPro" id="IPR020751">
    <property type="entry name" value="aa-tRNA-synth_I_codon-bd_sub2"/>
</dbReference>
<dbReference type="InterPro" id="IPR001412">
    <property type="entry name" value="aa-tRNA-synth_I_CS"/>
</dbReference>
<dbReference type="InterPro" id="IPR008925">
    <property type="entry name" value="aa_tRNA-synth_I_cd-bd_sf"/>
</dbReference>
<dbReference type="InterPro" id="IPR004527">
    <property type="entry name" value="Glu-tRNA-ligase_bac/mito"/>
</dbReference>
<dbReference type="InterPro" id="IPR000924">
    <property type="entry name" value="Glu/Gln-tRNA-synth"/>
</dbReference>
<dbReference type="InterPro" id="IPR020058">
    <property type="entry name" value="Glu/Gln-tRNA-synth_Ib_cat-dom"/>
</dbReference>
<dbReference type="InterPro" id="IPR049940">
    <property type="entry name" value="GluQ/Sye"/>
</dbReference>
<dbReference type="InterPro" id="IPR033910">
    <property type="entry name" value="GluRS_core"/>
</dbReference>
<dbReference type="InterPro" id="IPR014729">
    <property type="entry name" value="Rossmann-like_a/b/a_fold"/>
</dbReference>
<dbReference type="NCBIfam" id="TIGR00464">
    <property type="entry name" value="gltX_bact"/>
    <property type="match status" value="1"/>
</dbReference>
<dbReference type="PANTHER" id="PTHR43311">
    <property type="entry name" value="GLUTAMATE--TRNA LIGASE"/>
    <property type="match status" value="1"/>
</dbReference>
<dbReference type="PANTHER" id="PTHR43311:SF2">
    <property type="entry name" value="GLUTAMATE--TRNA LIGASE, MITOCHONDRIAL-RELATED"/>
    <property type="match status" value="1"/>
</dbReference>
<dbReference type="Pfam" id="PF19269">
    <property type="entry name" value="Anticodon_2"/>
    <property type="match status" value="1"/>
</dbReference>
<dbReference type="Pfam" id="PF00749">
    <property type="entry name" value="tRNA-synt_1c"/>
    <property type="match status" value="1"/>
</dbReference>
<dbReference type="PRINTS" id="PR00987">
    <property type="entry name" value="TRNASYNTHGLU"/>
</dbReference>
<dbReference type="SUPFAM" id="SSF48163">
    <property type="entry name" value="An anticodon-binding domain of class I aminoacyl-tRNA synthetases"/>
    <property type="match status" value="1"/>
</dbReference>
<dbReference type="SUPFAM" id="SSF52374">
    <property type="entry name" value="Nucleotidylyl transferase"/>
    <property type="match status" value="1"/>
</dbReference>
<dbReference type="PROSITE" id="PS00178">
    <property type="entry name" value="AA_TRNA_LIGASE_I"/>
    <property type="match status" value="1"/>
</dbReference>
<reference key="1">
    <citation type="journal article" date="2009" name="Infect. Immun.">
        <title>Comparative genomics reveal extensive transposon-mediated genomic plasticity and diversity among potential effector proteins within the genus Coxiella.</title>
        <authorList>
            <person name="Beare P.A."/>
            <person name="Unsworth N."/>
            <person name="Andoh M."/>
            <person name="Voth D.E."/>
            <person name="Omsland A."/>
            <person name="Gilk S.D."/>
            <person name="Williams K.P."/>
            <person name="Sobral B.W."/>
            <person name="Kupko J.J. III"/>
            <person name="Porcella S.F."/>
            <person name="Samuel J.E."/>
            <person name="Heinzen R.A."/>
        </authorList>
    </citation>
    <scope>NUCLEOTIDE SEQUENCE [LARGE SCALE GENOMIC DNA]</scope>
    <source>
        <strain>Dugway 5J108-111</strain>
    </source>
</reference>
<comment type="function">
    <text evidence="1">Catalyzes the attachment of glutamate to tRNA(Glu) in a two-step reaction: glutamate is first activated by ATP to form Glu-AMP and then transferred to the acceptor end of tRNA(Glu).</text>
</comment>
<comment type="catalytic activity">
    <reaction evidence="1">
        <text>tRNA(Glu) + L-glutamate + ATP = L-glutamyl-tRNA(Glu) + AMP + diphosphate</text>
        <dbReference type="Rhea" id="RHEA:23540"/>
        <dbReference type="Rhea" id="RHEA-COMP:9663"/>
        <dbReference type="Rhea" id="RHEA-COMP:9680"/>
        <dbReference type="ChEBI" id="CHEBI:29985"/>
        <dbReference type="ChEBI" id="CHEBI:30616"/>
        <dbReference type="ChEBI" id="CHEBI:33019"/>
        <dbReference type="ChEBI" id="CHEBI:78442"/>
        <dbReference type="ChEBI" id="CHEBI:78520"/>
        <dbReference type="ChEBI" id="CHEBI:456215"/>
        <dbReference type="EC" id="6.1.1.17"/>
    </reaction>
</comment>
<comment type="cofactor">
    <cofactor evidence="1">
        <name>Zn(2+)</name>
        <dbReference type="ChEBI" id="CHEBI:29105"/>
    </cofactor>
    <text evidence="1">Binds 1 zinc ion per subunit.</text>
</comment>
<comment type="subunit">
    <text evidence="1">Monomer.</text>
</comment>
<comment type="subcellular location">
    <subcellularLocation>
        <location evidence="1">Cytoplasm</location>
    </subcellularLocation>
</comment>
<comment type="similarity">
    <text evidence="1">Belongs to the class-I aminoacyl-tRNA synthetase family. Glutamate--tRNA ligase type 1 subfamily.</text>
</comment>
<comment type="sequence caution" evidence="2">
    <conflict type="erroneous initiation">
        <sequence resource="EMBL-CDS" id="ABS76545"/>
    </conflict>
</comment>
<feature type="chain" id="PRO_0000367660" description="Glutamate--tRNA ligase 2">
    <location>
        <begin position="1"/>
        <end position="469"/>
    </location>
</feature>
<feature type="short sequence motif" description="'HIGH' region" evidence="1">
    <location>
        <begin position="10"/>
        <end position="20"/>
    </location>
</feature>
<feature type="short sequence motif" description="'KMSKS' region" evidence="1">
    <location>
        <begin position="237"/>
        <end position="241"/>
    </location>
</feature>
<feature type="binding site" evidence="1">
    <location>
        <position position="99"/>
    </location>
    <ligand>
        <name>Zn(2+)</name>
        <dbReference type="ChEBI" id="CHEBI:29105"/>
    </ligand>
</feature>
<feature type="binding site" evidence="1">
    <location>
        <position position="101"/>
    </location>
    <ligand>
        <name>Zn(2+)</name>
        <dbReference type="ChEBI" id="CHEBI:29105"/>
    </ligand>
</feature>
<feature type="binding site" evidence="1">
    <location>
        <position position="126"/>
    </location>
    <ligand>
        <name>Zn(2+)</name>
        <dbReference type="ChEBI" id="CHEBI:29105"/>
    </ligand>
</feature>
<feature type="binding site" evidence="1">
    <location>
        <position position="128"/>
    </location>
    <ligand>
        <name>Zn(2+)</name>
        <dbReference type="ChEBI" id="CHEBI:29105"/>
    </ligand>
</feature>
<feature type="binding site" evidence="1">
    <location>
        <position position="240"/>
    </location>
    <ligand>
        <name>ATP</name>
        <dbReference type="ChEBI" id="CHEBI:30616"/>
    </ligand>
</feature>
<sequence length="469" mass="53697">MKHIRTRFAPSPTGYLHIGGVRTALFSWLFARQNNGAFILRIEDTDVARSTQASVDAILEGLRWLQIDWNEGPYYQSQRMDRYREVIEQLVKSDDAYRCYCSKERLIELRNTQLKNKQKPRYDGFCRDKAPRQSNEPFVIRFRNPVEGAVVFDDLIRGTISIDNRELDDLIIARSDGGPTYNLTVVVDDWDMKITHVIRGDDHINNTPRQINILHALGAELPHYGHVPMILGPDGKRLSKRHGAVSVLQYRDEGYLPEALMNYLIRLGWAHGDQEIFSREEMVQLFDISAVSRSPAAFNPEKLLWLNQHYLKTVSPTIIAEAFATQLEKAGTDLRNGPSLEQVIALQAERTKTLKEMAQRSLYFYQEVRSYDEKAARKHLLATIVEPLQRVRERLASLPSWEKEAIHEVIVETAQLHQLKLGQLAQPIRVALTGDTVSPPIDATLYLIGRDSALKRLDHAIRFIHQGMG</sequence>
<keyword id="KW-0030">Aminoacyl-tRNA synthetase</keyword>
<keyword id="KW-0067">ATP-binding</keyword>
<keyword id="KW-0963">Cytoplasm</keyword>
<keyword id="KW-0436">Ligase</keyword>
<keyword id="KW-0479">Metal-binding</keyword>
<keyword id="KW-0547">Nucleotide-binding</keyword>
<keyword id="KW-0648">Protein biosynthesis</keyword>
<keyword id="KW-0862">Zinc</keyword>
<evidence type="ECO:0000255" key="1">
    <source>
        <dbReference type="HAMAP-Rule" id="MF_00022"/>
    </source>
</evidence>
<evidence type="ECO:0000305" key="2"/>
<accession>A9KD63</accession>